<accession>A8X9H4</accession>
<reference evidence="4" key="1">
    <citation type="journal article" date="2003" name="PLoS Biol.">
        <title>The genome sequence of Caenorhabditis briggsae: a platform for comparative genomics.</title>
        <authorList>
            <person name="Stein L.D."/>
            <person name="Bao Z."/>
            <person name="Blasiar D."/>
            <person name="Blumenthal T."/>
            <person name="Brent M.R."/>
            <person name="Chen N."/>
            <person name="Chinwalla A."/>
            <person name="Clarke L."/>
            <person name="Clee C."/>
            <person name="Coghlan A."/>
            <person name="Coulson A."/>
            <person name="D'Eustachio P."/>
            <person name="Fitch D.H.A."/>
            <person name="Fulton L.A."/>
            <person name="Fulton R.E."/>
            <person name="Griffiths-Jones S."/>
            <person name="Harris T.W."/>
            <person name="Hillier L.W."/>
            <person name="Kamath R."/>
            <person name="Kuwabara P.E."/>
            <person name="Mardis E.R."/>
            <person name="Marra M.A."/>
            <person name="Miner T.L."/>
            <person name="Minx P."/>
            <person name="Mullikin J.C."/>
            <person name="Plumb R.W."/>
            <person name="Rogers J."/>
            <person name="Schein J.E."/>
            <person name="Sohrmann M."/>
            <person name="Spieth J."/>
            <person name="Stajich J.E."/>
            <person name="Wei C."/>
            <person name="Willey D."/>
            <person name="Wilson R.K."/>
            <person name="Durbin R.M."/>
            <person name="Waterston R.H."/>
        </authorList>
    </citation>
    <scope>NUCLEOTIDE SEQUENCE [LARGE SCALE GENOMIC DNA]</scope>
    <source>
        <strain>AF16</strain>
    </source>
</reference>
<sequence length="680" mass="73119">MLRVNLLILLCFVPFSLNNPLPTLPPDTANAYLRSFLPWWPNNTDFSLRAAPTPSESENSTEAVLLGAEYENGTDSTTGNQEDLDPATLRVQALPDSPLDALSPENAPKSFVSESMNHHDGNFIINFDEMGECPRDCSNDLREALGIVLQDMSHVERYHRICEKYSNASTCVNEDGRCDKDDRGMFEMMTSGLHYMCVEQELAFNATIKCIDDEAGLVQSECDAQCQTKNLFMNWMMRTAFQDTIQQGVNGIVGAATGTNANPLAFLQGAEGAAGGTPTGWADMLATVEQRPPSPQDAQQGFENFRQFTNDLCRIGDCMLDCIRSKFNTRCEGSAGTLLSEVFVRPIAASQNKLSILRPVLGSFMPEQCNYLTNNADLKKHRIDSTMDEELKRMYAEKMAKEIRDRNAQDELLSNLVPLDENGVPLPRALPELKSVDSPLDVSVKTLDQLILDMYSKNETKKAETTKKSYPNTTTVAPKNDDQAANTTAETTKTTSANITHVETTTLGNPKTEEVLSDVSLDTSGNNSTVADSGEGSAEGAGEGTEEDAEYSGSGNESTTEEEYSGSEEVSATDEGHPLAADESNEGLLTGSGEPAEEASGTGNSSVEGSGSGLDSLRSYIETSGEASGGAPGEASGEASGEASGEVSGEEEFSGYSGESPGENESSGEVPLTTTLHELY</sequence>
<proteinExistence type="inferred from homology"/>
<feature type="signal peptide" evidence="2">
    <location>
        <begin position="1"/>
        <end position="18"/>
    </location>
</feature>
<feature type="chain" id="PRO_0000320223" description="Chondroitin proteoglycan 4">
    <location>
        <begin position="19"/>
        <end position="680"/>
    </location>
</feature>
<feature type="region of interest" description="Disordered" evidence="3">
    <location>
        <begin position="460"/>
        <end position="680"/>
    </location>
</feature>
<feature type="compositionally biased region" description="Low complexity" evidence="3">
    <location>
        <begin position="484"/>
        <end position="500"/>
    </location>
</feature>
<feature type="compositionally biased region" description="Polar residues" evidence="3">
    <location>
        <begin position="520"/>
        <end position="530"/>
    </location>
</feature>
<feature type="compositionally biased region" description="Low complexity" evidence="3">
    <location>
        <begin position="633"/>
        <end position="647"/>
    </location>
</feature>
<feature type="compositionally biased region" description="Low complexity" evidence="3">
    <location>
        <begin position="654"/>
        <end position="669"/>
    </location>
</feature>
<feature type="glycosylation site" description="N-linked (GlcNAc...) asparagine" evidence="2">
    <location>
        <position position="42"/>
    </location>
</feature>
<feature type="glycosylation site" description="N-linked (GlcNAc...) asparagine" evidence="2">
    <location>
        <position position="59"/>
    </location>
</feature>
<feature type="glycosylation site" description="N-linked (GlcNAc...) asparagine" evidence="2">
    <location>
        <position position="72"/>
    </location>
</feature>
<feature type="glycosylation site" description="N-linked (GlcNAc...) asparagine" evidence="2">
    <location>
        <position position="167"/>
    </location>
</feature>
<feature type="glycosylation site" description="N-linked (GlcNAc...) asparagine" evidence="2">
    <location>
        <position position="205"/>
    </location>
</feature>
<feature type="glycosylation site" description="N-linked (GlcNAc...) asparagine" evidence="2">
    <location>
        <position position="458"/>
    </location>
</feature>
<feature type="glycosylation site" description="N-linked (GlcNAc...) asparagine" evidence="2">
    <location>
        <position position="472"/>
    </location>
</feature>
<feature type="glycosylation site" description="N-linked (GlcNAc...) asparagine" evidence="2">
    <location>
        <position position="486"/>
    </location>
</feature>
<feature type="glycosylation site" description="N-linked (GlcNAc...) asparagine" evidence="2">
    <location>
        <position position="498"/>
    </location>
</feature>
<feature type="glycosylation site" description="N-linked (GlcNAc...) asparagine" evidence="2">
    <location>
        <position position="526"/>
    </location>
</feature>
<feature type="glycosylation site" description="N-linked (GlcNAc...) asparagine" evidence="2">
    <location>
        <position position="527"/>
    </location>
</feature>
<feature type="glycosylation site" description="N-linked (GlcNAc...) asparagine" evidence="2">
    <location>
        <position position="556"/>
    </location>
</feature>
<feature type="glycosylation site" description="N-linked (GlcNAc...) asparagine" evidence="2">
    <location>
        <position position="604"/>
    </location>
</feature>
<feature type="glycosylation site" description="O-linked (Xyl...) (chondroitin sulfate) serine" evidence="1">
    <location>
        <position position="640"/>
    </location>
</feature>
<feature type="glycosylation site" description="O-linked (Xyl...) (chondroitin sulfate) serine" evidence="1">
    <location>
        <position position="644"/>
    </location>
</feature>
<feature type="glycosylation site" description="N-linked (GlcNAc...) asparagine" evidence="2">
    <location>
        <position position="664"/>
    </location>
</feature>
<dbReference type="EMBL" id="HE600954">
    <property type="protein sequence ID" value="CAP29286.3"/>
    <property type="molecule type" value="Genomic_DNA"/>
</dbReference>
<dbReference type="FunCoup" id="A8X9H4">
    <property type="interactions" value="351"/>
</dbReference>
<dbReference type="STRING" id="6238.A8X9H4"/>
<dbReference type="GlyCosmos" id="A8X9H4">
    <property type="glycosylation" value="16 sites, No reported glycans"/>
</dbReference>
<dbReference type="EnsemblMetazoa" id="CBG09272.1">
    <property type="protein sequence ID" value="CBG09272.1"/>
    <property type="gene ID" value="WBGene00030884"/>
</dbReference>
<dbReference type="WormBase" id="CBG09272">
    <property type="protein sequence ID" value="CBP37594"/>
    <property type="gene ID" value="WBGene00030884"/>
    <property type="gene designation" value="Cbr-cpg-4"/>
</dbReference>
<dbReference type="eggNOG" id="ENOG502S6Z7">
    <property type="taxonomic scope" value="Eukaryota"/>
</dbReference>
<dbReference type="HOGENOM" id="CLU_404523_0_0_1"/>
<dbReference type="InParanoid" id="A8X9H4"/>
<dbReference type="OMA" id="MCVEQEL"/>
<dbReference type="Proteomes" id="UP000008549">
    <property type="component" value="Unassembled WGS sequence"/>
</dbReference>
<dbReference type="InterPro" id="IPR029153">
    <property type="entry name" value="CPG4"/>
</dbReference>
<dbReference type="InterPro" id="IPR053123">
    <property type="entry name" value="CPG4-like"/>
</dbReference>
<dbReference type="PANTHER" id="PTHR37442:SF2">
    <property type="entry name" value="CHONDROITIN PROTEOGLYCAN 4"/>
    <property type="match status" value="1"/>
</dbReference>
<dbReference type="PANTHER" id="PTHR37442">
    <property type="entry name" value="F18A1.7 PROTEIN-RELATED"/>
    <property type="match status" value="1"/>
</dbReference>
<dbReference type="Pfam" id="PF15481">
    <property type="entry name" value="CPG4"/>
    <property type="match status" value="1"/>
</dbReference>
<keyword id="KW-0325">Glycoprotein</keyword>
<keyword id="KW-0654">Proteoglycan</keyword>
<keyword id="KW-1185">Reference proteome</keyword>
<keyword id="KW-0732">Signal</keyword>
<gene>
    <name type="primary">cpg-4</name>
    <name type="ORF">CBG09272</name>
</gene>
<evidence type="ECO:0000250" key="1"/>
<evidence type="ECO:0000255" key="2"/>
<evidence type="ECO:0000256" key="3">
    <source>
        <dbReference type="SAM" id="MobiDB-lite"/>
    </source>
</evidence>
<evidence type="ECO:0000305" key="4"/>
<organism>
    <name type="scientific">Caenorhabditis briggsae</name>
    <dbReference type="NCBI Taxonomy" id="6238"/>
    <lineage>
        <taxon>Eukaryota</taxon>
        <taxon>Metazoa</taxon>
        <taxon>Ecdysozoa</taxon>
        <taxon>Nematoda</taxon>
        <taxon>Chromadorea</taxon>
        <taxon>Rhabditida</taxon>
        <taxon>Rhabditina</taxon>
        <taxon>Rhabditomorpha</taxon>
        <taxon>Rhabditoidea</taxon>
        <taxon>Rhabditidae</taxon>
        <taxon>Peloderinae</taxon>
        <taxon>Caenorhabditis</taxon>
    </lineage>
</organism>
<protein>
    <recommendedName>
        <fullName>Chondroitin proteoglycan 4</fullName>
    </recommendedName>
</protein>
<name>CPG4_CAEBR</name>